<protein>
    <recommendedName>
        <fullName evidence="7">Glycerophosphodiester phosphodiesterase domain-containing protein 5</fullName>
    </recommendedName>
    <alternativeName>
        <fullName evidence="1">Glycerophosphocholine phosphodiesterase GDPD5</fullName>
        <ecNumber evidence="1">3.1.4.2</ecNumber>
    </alternativeName>
    <alternativeName>
        <fullName evidence="6">Glycerophosphodiester phosphodiesterase 2</fullName>
    </alternativeName>
    <alternativeName>
        <fullName evidence="7">Phosphoinositide phospholipase C GDPD5</fullName>
        <ecNumber evidence="5">3.1.4.11</ecNumber>
    </alternativeName>
</protein>
<comment type="function">
    <text evidence="1 3 4 5">Glycerophosphodiester phosphodiesterase that promotes cell cycle exit and drives spinal motor neuron differentiation (PubMed:16195461, PubMed:19766572, PubMed:23329048). Mediates the cleavage of glycosylphosphatidylinositol (GPI) anchor of target proteins: removes the GPI-anchor of RECK, leading to release RECK from the plasma membrane (PubMed:23329048). May contribute to the osmotic regulation of cellular glycerophosphocholine (By similarity).</text>
</comment>
<comment type="catalytic activity">
    <reaction evidence="5">
        <text>a 1,2-diacyl-sn-glycero-3-phospho-(1D-myo-inositol-4,5-bisphosphate) + H2O = 1D-myo-inositol 1,4,5-trisphosphate + a 1,2-diacyl-sn-glycerol + H(+)</text>
        <dbReference type="Rhea" id="RHEA:33179"/>
        <dbReference type="ChEBI" id="CHEBI:15377"/>
        <dbReference type="ChEBI" id="CHEBI:15378"/>
        <dbReference type="ChEBI" id="CHEBI:17815"/>
        <dbReference type="ChEBI" id="CHEBI:58456"/>
        <dbReference type="ChEBI" id="CHEBI:203600"/>
        <dbReference type="EC" id="3.1.4.11"/>
    </reaction>
</comment>
<comment type="catalytic activity">
    <reaction evidence="1">
        <text>sn-glycerol 3-phosphocholine + H2O = sn-glycerol 3-phosphate + choline + H(+)</text>
        <dbReference type="Rhea" id="RHEA:16061"/>
        <dbReference type="ChEBI" id="CHEBI:15354"/>
        <dbReference type="ChEBI" id="CHEBI:15377"/>
        <dbReference type="ChEBI" id="CHEBI:15378"/>
        <dbReference type="ChEBI" id="CHEBI:16870"/>
        <dbReference type="ChEBI" id="CHEBI:57597"/>
        <dbReference type="EC" id="3.1.4.2"/>
    </reaction>
    <physiologicalReaction direction="left-to-right" evidence="1">
        <dbReference type="Rhea" id="RHEA:16062"/>
    </physiologicalReaction>
</comment>
<comment type="activity regulation">
    <text evidence="4">Activated by PRDX1 by reduction of an intramolecular disulfide bond.</text>
</comment>
<comment type="subunit">
    <text evidence="4">Interacts with PRDX1; forms a mixed-disulfide with PRDX1, leading to disrupt intramolecular disulfide bond between Cys-25 and Cys-576.</text>
</comment>
<comment type="interaction">
    <interactant intactId="EBI-2464223">
        <id>Q3KTM2</id>
    </interactant>
    <interactant intactId="EBI-2464239">
        <id>P0CB50</id>
        <label>PRDX1</label>
    </interactant>
    <organismsDiffer>false</organismsDiffer>
    <experiments>5</experiments>
</comment>
<comment type="subcellular location">
    <subcellularLocation>
        <location evidence="1">Endomembrane system</location>
        <topology evidence="2">Multi-pass membrane protein</topology>
    </subcellularLocation>
    <subcellularLocation>
        <location evidence="1">Cytoplasm</location>
        <location evidence="1">Perinuclear region</location>
    </subcellularLocation>
    <subcellularLocation>
        <location evidence="1">Cell projection</location>
        <location evidence="1">Growth cone</location>
    </subcellularLocation>
</comment>
<comment type="tissue specificity">
    <text evidence="3">Detected in mature motor neurons.</text>
</comment>
<comment type="developmental stage">
    <text evidence="3">Expression started in the intermediate zone of spinal motor neurons as they differentiate into postmitotic motor neurons.</text>
</comment>
<comment type="PTM">
    <text evidence="4">Intramolecular disulfide bond between Cys-25 and Cys-576 is reduced by PRDX1.</text>
</comment>
<comment type="similarity">
    <text evidence="7">Belongs to the glycerophosphoryl diester phosphodiesterase family.</text>
</comment>
<accession>Q3KTM2</accession>
<proteinExistence type="evidence at protein level"/>
<evidence type="ECO:0000250" key="1">
    <source>
        <dbReference type="UniProtKB" id="Q640M6"/>
    </source>
</evidence>
<evidence type="ECO:0000255" key="2"/>
<evidence type="ECO:0000269" key="3">
    <source>
    </source>
</evidence>
<evidence type="ECO:0000269" key="4">
    <source>
    </source>
</evidence>
<evidence type="ECO:0000269" key="5">
    <source>
    </source>
</evidence>
<evidence type="ECO:0000303" key="6">
    <source>
    </source>
</evidence>
<evidence type="ECO:0000305" key="7"/>
<reference key="1">
    <citation type="journal article" date="2005" name="Science">
        <title>Transmembrane protein GDE2 induces motor neuron differentiation in vivo.</title>
        <authorList>
            <person name="Rao M."/>
            <person name="Sockanathan S."/>
        </authorList>
    </citation>
    <scope>NUCLEOTIDE SEQUENCE [MRNA]</scope>
    <scope>FUNCTION</scope>
    <scope>TISSUE SPECIFICITY</scope>
    <scope>DEVELOPMENTAL STAGE</scope>
    <scope>MUTAGENESIS OF HIS-275</scope>
</reference>
<reference key="2">
    <citation type="journal article" date="2009" name="Cell">
        <title>The antioxidant enzyme Prdx1 controls neuronal differentiation by thiol-redox-dependent activation of GDE2.</title>
        <authorList>
            <person name="Yan Y."/>
            <person name="Sabharwal P."/>
            <person name="Rao M."/>
            <person name="Sockanathan S."/>
        </authorList>
    </citation>
    <scope>FUNCTION</scope>
    <scope>INTERACTION WITH PRDX1</scope>
    <scope>ACTIVITY REGULATION</scope>
    <scope>DISULFIDE BOND</scope>
    <scope>MUTAGENESIS OF CYS-15; CYS-18; CYS-25 AND CYS-576</scope>
</reference>
<reference key="3">
    <citation type="journal article" date="2013" name="Science">
        <title>GDE2 promotes neurogenesis by glycosylphosphatidylinositol-anchor cleavage of RECK.</title>
        <authorList>
            <person name="Park S."/>
            <person name="Lee C."/>
            <person name="Sabharwal P."/>
            <person name="Zhang M."/>
            <person name="Meyers C.L."/>
            <person name="Sockanathan S."/>
        </authorList>
    </citation>
    <scope>FUNCTION</scope>
    <scope>MUTAGENESIS OF 236-ALA--LEU-239</scope>
</reference>
<feature type="chain" id="PRO_0000387960" description="Glycerophosphodiester phosphodiesterase domain-containing protein 5">
    <location>
        <begin position="1"/>
        <end position="599"/>
    </location>
</feature>
<feature type="topological domain" description="Cytoplasmic" evidence="2">
    <location>
        <begin position="1"/>
        <end position="42"/>
    </location>
</feature>
<feature type="transmembrane region" description="Helical" evidence="2">
    <location>
        <begin position="43"/>
        <end position="63"/>
    </location>
</feature>
<feature type="topological domain" description="Extracellular" evidence="2">
    <location>
        <begin position="64"/>
        <end position="87"/>
    </location>
</feature>
<feature type="transmembrane region" description="Helical" evidence="2">
    <location>
        <begin position="88"/>
        <end position="108"/>
    </location>
</feature>
<feature type="topological domain" description="Cytoplasmic" evidence="2">
    <location>
        <begin position="109"/>
        <end position="125"/>
    </location>
</feature>
<feature type="transmembrane region" description="Helical" evidence="2">
    <location>
        <begin position="126"/>
        <end position="146"/>
    </location>
</feature>
<feature type="topological domain" description="Extracellular" evidence="2">
    <location>
        <begin position="147"/>
        <end position="160"/>
    </location>
</feature>
<feature type="transmembrane region" description="Helical" evidence="2">
    <location>
        <begin position="161"/>
        <end position="181"/>
    </location>
</feature>
<feature type="topological domain" description="Cytoplasmic" evidence="2">
    <location>
        <begin position="182"/>
        <end position="192"/>
    </location>
</feature>
<feature type="transmembrane region" description="Helical" evidence="2">
    <location>
        <begin position="193"/>
        <end position="213"/>
    </location>
</feature>
<feature type="topological domain" description="Extracellular" evidence="2">
    <location>
        <begin position="214"/>
        <end position="497"/>
    </location>
</feature>
<feature type="transmembrane region" description="Helical" evidence="2">
    <location>
        <begin position="498"/>
        <end position="518"/>
    </location>
</feature>
<feature type="topological domain" description="Cytoplasmic" evidence="2">
    <location>
        <begin position="519"/>
        <end position="599"/>
    </location>
</feature>
<feature type="domain" description="GP-PDE">
    <location>
        <begin position="228"/>
        <end position="485"/>
    </location>
</feature>
<feature type="glycosylation site" description="N-linked (GlcNAc...) asparagine" evidence="2">
    <location>
        <position position="301"/>
    </location>
</feature>
<feature type="glycosylation site" description="N-linked (GlcNAc...) asparagine" evidence="2">
    <location>
        <position position="336"/>
    </location>
</feature>
<feature type="glycosylation site" description="N-linked (GlcNAc...) asparagine" evidence="2">
    <location>
        <position position="352"/>
    </location>
</feature>
<feature type="glycosylation site" description="N-linked (GlcNAc...) asparagine" evidence="2">
    <location>
        <position position="374"/>
    </location>
</feature>
<feature type="glycosylation site" description="N-linked (GlcNAc...) asparagine" evidence="2">
    <location>
        <position position="448"/>
    </location>
</feature>
<feature type="disulfide bond" evidence="4">
    <location>
        <begin position="15"/>
        <end position="18"/>
    </location>
</feature>
<feature type="disulfide bond" evidence="4">
    <location>
        <begin position="25"/>
        <end position="576"/>
    </location>
</feature>
<feature type="mutagenesis site" description="Retains the ability to bind PRDX1; forms a mixed-disulfide with PRDX1; can be reduced by PRDX1; promote motor neuron differentiation as the wild type; when associated with S-18." evidence="4">
    <original>C</original>
    <variation>S</variation>
    <location>
        <position position="15"/>
    </location>
</feature>
<feature type="mutagenesis site" description="Retains the ability to bind PRDX1; forms a mixed-disulfide with PRDX1; can be reduced by PRDX1; promote motor neuron differentiation as the wild type; when associated with S-15." evidence="4">
    <original>C</original>
    <variation>S</variation>
    <location>
        <position position="18"/>
    </location>
</feature>
<feature type="mutagenesis site" description="Enhances the ability to promote motor neuron differentiation. Retains the ability to bind PRDX1; loss the ability to form a mixed-disulfide with PRDX1; loss the ability to be reduced by PRDX1; when associated with S-576." evidence="4">
    <original>C</original>
    <variation>S</variation>
    <location>
        <position position="25"/>
    </location>
</feature>
<feature type="mutagenesis site" description="Catalytically inactive mutant. Abolishes ability to remove the GPI-anchor of RECK." evidence="5">
    <original>APML</original>
    <variation>GAHD</variation>
    <location>
        <begin position="236"/>
        <end position="239"/>
    </location>
</feature>
<feature type="mutagenesis site" description="Abolishes the ability to promote motor neuron differentiation." evidence="3">
    <original>H</original>
    <variation>A</variation>
    <location>
        <position position="275"/>
    </location>
</feature>
<feature type="mutagenesis site" description="Enhances the ability to promote motor neuron differentiation. Retains the ability to bind PRDX1; loss the ability to form a mixed-disulfide with PRDX1; loss the ability to be reduced by PRDX1; when associated with S-25." evidence="4">
    <original>C</original>
    <variation>S</variation>
    <location>
        <position position="576"/>
    </location>
</feature>
<dbReference type="EC" id="3.1.4.2" evidence="1"/>
<dbReference type="EC" id="3.1.4.11" evidence="5"/>
<dbReference type="EMBL" id="AY910750">
    <property type="protein sequence ID" value="AAX89036.1"/>
    <property type="molecule type" value="mRNA"/>
</dbReference>
<dbReference type="SMR" id="Q3KTM2"/>
<dbReference type="FunCoup" id="Q3KTM2">
    <property type="interactions" value="73"/>
</dbReference>
<dbReference type="IntAct" id="Q3KTM2">
    <property type="interactions" value="3"/>
</dbReference>
<dbReference type="STRING" id="9031.ENSGALP00000043850"/>
<dbReference type="GlyCosmos" id="Q3KTM2">
    <property type="glycosylation" value="5 sites, No reported glycans"/>
</dbReference>
<dbReference type="GlyGen" id="Q3KTM2">
    <property type="glycosylation" value="5 sites"/>
</dbReference>
<dbReference type="PaxDb" id="9031-ENSGALP00000027954"/>
<dbReference type="VEuPathDB" id="HostDB:geneid_419070"/>
<dbReference type="eggNOG" id="KOG2258">
    <property type="taxonomic scope" value="Eukaryota"/>
</dbReference>
<dbReference type="InParanoid" id="Q3KTM2"/>
<dbReference type="OrthoDB" id="1058301at2759"/>
<dbReference type="PhylomeDB" id="Q3KTM2"/>
<dbReference type="Proteomes" id="UP000000539">
    <property type="component" value="Unassembled WGS sequence"/>
</dbReference>
<dbReference type="GO" id="GO:0012505">
    <property type="term" value="C:endomembrane system"/>
    <property type="evidence" value="ECO:0007669"/>
    <property type="project" value="UniProtKB-SubCell"/>
</dbReference>
<dbReference type="GO" id="GO:0030426">
    <property type="term" value="C:growth cone"/>
    <property type="evidence" value="ECO:0007669"/>
    <property type="project" value="UniProtKB-SubCell"/>
</dbReference>
<dbReference type="GO" id="GO:0048471">
    <property type="term" value="C:perinuclear region of cytoplasm"/>
    <property type="evidence" value="ECO:0007669"/>
    <property type="project" value="UniProtKB-SubCell"/>
</dbReference>
<dbReference type="GO" id="GO:0005886">
    <property type="term" value="C:plasma membrane"/>
    <property type="evidence" value="ECO:0000318"/>
    <property type="project" value="GO_Central"/>
</dbReference>
<dbReference type="GO" id="GO:0047389">
    <property type="term" value="F:glycerophosphocholine phosphodiesterase activity"/>
    <property type="evidence" value="ECO:0007669"/>
    <property type="project" value="UniProtKB-EC"/>
</dbReference>
<dbReference type="GO" id="GO:0008889">
    <property type="term" value="F:glycerophosphodiester phosphodiesterase activity"/>
    <property type="evidence" value="ECO:0000315"/>
    <property type="project" value="MGI"/>
</dbReference>
<dbReference type="GO" id="GO:0004435">
    <property type="term" value="F:phosphatidylinositol-4,5-bisphosphate phospholipase C activity"/>
    <property type="evidence" value="ECO:0007669"/>
    <property type="project" value="UniProtKB-EC"/>
</dbReference>
<dbReference type="GO" id="GO:0006629">
    <property type="term" value="P:lipid metabolic process"/>
    <property type="evidence" value="ECO:0007669"/>
    <property type="project" value="UniProtKB-KW"/>
</dbReference>
<dbReference type="GO" id="GO:0007399">
    <property type="term" value="P:nervous system development"/>
    <property type="evidence" value="ECO:0007669"/>
    <property type="project" value="UniProtKB-KW"/>
</dbReference>
<dbReference type="GO" id="GO:0045666">
    <property type="term" value="P:positive regulation of neuron differentiation"/>
    <property type="evidence" value="ECO:0000315"/>
    <property type="project" value="CACAO"/>
</dbReference>
<dbReference type="CDD" id="cd08608">
    <property type="entry name" value="GDPD_GDE2"/>
    <property type="match status" value="1"/>
</dbReference>
<dbReference type="FunFam" id="3.20.20.190:FF:000028">
    <property type="entry name" value="Glycerophosphodiester phosphodiesterase domain-containing protein 5"/>
    <property type="match status" value="1"/>
</dbReference>
<dbReference type="Gene3D" id="3.20.20.190">
    <property type="entry name" value="Phosphatidylinositol (PI) phosphodiesterase"/>
    <property type="match status" value="1"/>
</dbReference>
<dbReference type="InterPro" id="IPR030395">
    <property type="entry name" value="GP_PDE_dom"/>
</dbReference>
<dbReference type="InterPro" id="IPR017946">
    <property type="entry name" value="PLC-like_Pdiesterase_TIM-brl"/>
</dbReference>
<dbReference type="PANTHER" id="PTHR23344:SF6">
    <property type="entry name" value="GLYCEROPHOSPHODIESTER PHOSPHODIESTERASE DOMAIN-CONTAINING PROTEIN 5"/>
    <property type="match status" value="1"/>
</dbReference>
<dbReference type="PANTHER" id="PTHR23344">
    <property type="entry name" value="GLYCEROPHOSPHORYL DIESTER PHOSPHODIESTERASE"/>
    <property type="match status" value="1"/>
</dbReference>
<dbReference type="Pfam" id="PF03009">
    <property type="entry name" value="GDPD"/>
    <property type="match status" value="1"/>
</dbReference>
<dbReference type="SUPFAM" id="SSF51695">
    <property type="entry name" value="PLC-like phosphodiesterases"/>
    <property type="match status" value="1"/>
</dbReference>
<dbReference type="PROSITE" id="PS51704">
    <property type="entry name" value="GP_PDE"/>
    <property type="match status" value="1"/>
</dbReference>
<sequence length="599" mass="69101">MVKHQPLQYYEPQLCLSCLTGIYGCRWKRYQRSHDDTTKWERLWFLILTSSFFLTLVWFYFWWEVHNDYNEINWFLYNRMGYWSDWSIPILVTTAAGFTYITVLLILALCHIAVGQQMNLHWLHKIGLMTTLITTVVTMSSIAQLWDDEWEMVFISLQATAPFLHIGALAAVTALSWLIAGQFARMEKATSQMLMVTAYLAVVVALYLVPLTISSPCIMEKKALGPKPAIIGHRGAPMLAPENTLMSFQKAVEQKIYGVQADVILSYDGVPFLMHDKTLRRTTNVEEVFPGRAYEHSSMFNWTDLEMLNAGEWFLRNDPFWTAGSLSRSDYLEAANQSVCKLADMLEVIKDNTSLILNFQDLPPDHPYYTSYINITLKTILASGIQQQAVMWLPDTERQLVRQIAPAFQQTSGLKLDAERLREKGIVKLNLRYTKVTNEDVRDYMAANLSVNLYTVNEPWLYSILWCTGVPSVTSDSSHVLRKVPFPIWLMPPDEYRLIWITSDLISFIIIVGVFIFQNYHNDQWRLGSIRTYNPEQIMLSAAVRRSSRDVKIMKEKLIFSEINNGVETTDELSLCSENGYANEMVTPTDHRDTRLRMN</sequence>
<gene>
    <name type="primary">GDPD5</name>
    <name evidence="6" type="synonym">GDE2</name>
</gene>
<keyword id="KW-0966">Cell projection</keyword>
<keyword id="KW-0963">Cytoplasm</keyword>
<keyword id="KW-1015">Disulfide bond</keyword>
<keyword id="KW-0325">Glycoprotein</keyword>
<keyword id="KW-0378">Hydrolase</keyword>
<keyword id="KW-0443">Lipid metabolism</keyword>
<keyword id="KW-0472">Membrane</keyword>
<keyword id="KW-0524">Neurogenesis</keyword>
<keyword id="KW-1185">Reference proteome</keyword>
<keyword id="KW-0812">Transmembrane</keyword>
<keyword id="KW-1133">Transmembrane helix</keyword>
<name>GDPD5_CHICK</name>
<organism>
    <name type="scientific">Gallus gallus</name>
    <name type="common">Chicken</name>
    <dbReference type="NCBI Taxonomy" id="9031"/>
    <lineage>
        <taxon>Eukaryota</taxon>
        <taxon>Metazoa</taxon>
        <taxon>Chordata</taxon>
        <taxon>Craniata</taxon>
        <taxon>Vertebrata</taxon>
        <taxon>Euteleostomi</taxon>
        <taxon>Archelosauria</taxon>
        <taxon>Archosauria</taxon>
        <taxon>Dinosauria</taxon>
        <taxon>Saurischia</taxon>
        <taxon>Theropoda</taxon>
        <taxon>Coelurosauria</taxon>
        <taxon>Aves</taxon>
        <taxon>Neognathae</taxon>
        <taxon>Galloanserae</taxon>
        <taxon>Galliformes</taxon>
        <taxon>Phasianidae</taxon>
        <taxon>Phasianinae</taxon>
        <taxon>Gallus</taxon>
    </lineage>
</organism>